<name>HTPX_POLNS</name>
<organism>
    <name type="scientific">Polynucleobacter necessarius subsp. necessarius (strain STIR1)</name>
    <dbReference type="NCBI Taxonomy" id="452638"/>
    <lineage>
        <taxon>Bacteria</taxon>
        <taxon>Pseudomonadati</taxon>
        <taxon>Pseudomonadota</taxon>
        <taxon>Betaproteobacteria</taxon>
        <taxon>Burkholderiales</taxon>
        <taxon>Burkholderiaceae</taxon>
        <taxon>Polynucleobacter</taxon>
    </lineage>
</organism>
<protein>
    <recommendedName>
        <fullName evidence="1">Protease HtpX homolog</fullName>
        <ecNumber evidence="1">3.4.24.-</ecNumber>
    </recommendedName>
</protein>
<dbReference type="EC" id="3.4.24.-" evidence="1"/>
<dbReference type="EMBL" id="CP001010">
    <property type="protein sequence ID" value="ACB44829.1"/>
    <property type="molecule type" value="Genomic_DNA"/>
</dbReference>
<dbReference type="STRING" id="452638.Pnec_1776"/>
<dbReference type="KEGG" id="pne:Pnec_1776"/>
<dbReference type="eggNOG" id="COG0501">
    <property type="taxonomic scope" value="Bacteria"/>
</dbReference>
<dbReference type="HOGENOM" id="CLU_042266_3_0_4"/>
<dbReference type="OrthoDB" id="15218at2"/>
<dbReference type="GO" id="GO:0005886">
    <property type="term" value="C:plasma membrane"/>
    <property type="evidence" value="ECO:0007669"/>
    <property type="project" value="UniProtKB-SubCell"/>
</dbReference>
<dbReference type="GO" id="GO:0004222">
    <property type="term" value="F:metalloendopeptidase activity"/>
    <property type="evidence" value="ECO:0007669"/>
    <property type="project" value="UniProtKB-UniRule"/>
</dbReference>
<dbReference type="GO" id="GO:0008270">
    <property type="term" value="F:zinc ion binding"/>
    <property type="evidence" value="ECO:0007669"/>
    <property type="project" value="UniProtKB-UniRule"/>
</dbReference>
<dbReference type="GO" id="GO:0006508">
    <property type="term" value="P:proteolysis"/>
    <property type="evidence" value="ECO:0007669"/>
    <property type="project" value="UniProtKB-KW"/>
</dbReference>
<dbReference type="CDD" id="cd07336">
    <property type="entry name" value="M48B_HtpX_like"/>
    <property type="match status" value="1"/>
</dbReference>
<dbReference type="Gene3D" id="3.30.2010.10">
    <property type="entry name" value="Metalloproteases ('zincins'), catalytic domain"/>
    <property type="match status" value="1"/>
</dbReference>
<dbReference type="HAMAP" id="MF_00188">
    <property type="entry name" value="Pept_M48_protease_HtpX"/>
    <property type="match status" value="1"/>
</dbReference>
<dbReference type="InterPro" id="IPR050083">
    <property type="entry name" value="HtpX_protease"/>
</dbReference>
<dbReference type="InterPro" id="IPR022919">
    <property type="entry name" value="Pept_M48_protease_HtpX"/>
</dbReference>
<dbReference type="InterPro" id="IPR001915">
    <property type="entry name" value="Peptidase_M48"/>
</dbReference>
<dbReference type="NCBIfam" id="NF002826">
    <property type="entry name" value="PRK03001.1"/>
    <property type="match status" value="1"/>
</dbReference>
<dbReference type="PANTHER" id="PTHR43221">
    <property type="entry name" value="PROTEASE HTPX"/>
    <property type="match status" value="1"/>
</dbReference>
<dbReference type="PANTHER" id="PTHR43221:SF1">
    <property type="entry name" value="PROTEASE HTPX"/>
    <property type="match status" value="1"/>
</dbReference>
<dbReference type="Pfam" id="PF01435">
    <property type="entry name" value="Peptidase_M48"/>
    <property type="match status" value="1"/>
</dbReference>
<sequence length="288" mass="30976">MFNFAKTAVLMAAITALFIVVGGMLGGEQGMLMALLMAVGMNFFSYWFSDTMVLKMTNAQQVDERSAPQFYALVRELSEKAGLPMPKVFLIDEDAPNAFATGRNPDNASVAATIGVLKILSNRELRGVMAHELAHVRHRDILISAVAATMAGAISALANFAMFFGGRDSEGRPNNPIASLMVAILAPIAASLIQMSISRAREYEADRGGAEISSDPEALAHALEKIHNYAQGTPFQAVEQHPETAQMMILNPLTAGGLAQLFSTHPPTEERVARLMHMAKNGEYPGAN</sequence>
<evidence type="ECO:0000255" key="1">
    <source>
        <dbReference type="HAMAP-Rule" id="MF_00188"/>
    </source>
</evidence>
<proteinExistence type="inferred from homology"/>
<feature type="chain" id="PRO_1000098831" description="Protease HtpX homolog">
    <location>
        <begin position="1"/>
        <end position="288"/>
    </location>
</feature>
<feature type="transmembrane region" description="Helical" evidence="1">
    <location>
        <begin position="7"/>
        <end position="27"/>
    </location>
</feature>
<feature type="transmembrane region" description="Helical" evidence="1">
    <location>
        <begin position="29"/>
        <end position="49"/>
    </location>
</feature>
<feature type="transmembrane region" description="Helical" evidence="1">
    <location>
        <begin position="141"/>
        <end position="161"/>
    </location>
</feature>
<feature type="transmembrane region" description="Helical" evidence="1">
    <location>
        <begin position="177"/>
        <end position="197"/>
    </location>
</feature>
<feature type="active site" evidence="1">
    <location>
        <position position="132"/>
    </location>
</feature>
<feature type="binding site" evidence="1">
    <location>
        <position position="131"/>
    </location>
    <ligand>
        <name>Zn(2+)</name>
        <dbReference type="ChEBI" id="CHEBI:29105"/>
        <note>catalytic</note>
    </ligand>
</feature>
<feature type="binding site" evidence="1">
    <location>
        <position position="135"/>
    </location>
    <ligand>
        <name>Zn(2+)</name>
        <dbReference type="ChEBI" id="CHEBI:29105"/>
        <note>catalytic</note>
    </ligand>
</feature>
<feature type="binding site" evidence="1">
    <location>
        <position position="202"/>
    </location>
    <ligand>
        <name>Zn(2+)</name>
        <dbReference type="ChEBI" id="CHEBI:29105"/>
        <note>catalytic</note>
    </ligand>
</feature>
<keyword id="KW-0997">Cell inner membrane</keyword>
<keyword id="KW-1003">Cell membrane</keyword>
<keyword id="KW-0378">Hydrolase</keyword>
<keyword id="KW-0472">Membrane</keyword>
<keyword id="KW-0479">Metal-binding</keyword>
<keyword id="KW-0482">Metalloprotease</keyword>
<keyword id="KW-0645">Protease</keyword>
<keyword id="KW-0812">Transmembrane</keyword>
<keyword id="KW-1133">Transmembrane helix</keyword>
<keyword id="KW-0862">Zinc</keyword>
<accession>B1XSN0</accession>
<gene>
    <name evidence="1" type="primary">htpX</name>
    <name type="ordered locus">Pnec_1776</name>
</gene>
<comment type="cofactor">
    <cofactor evidence="1">
        <name>Zn(2+)</name>
        <dbReference type="ChEBI" id="CHEBI:29105"/>
    </cofactor>
    <text evidence="1">Binds 1 zinc ion per subunit.</text>
</comment>
<comment type="subcellular location">
    <subcellularLocation>
        <location evidence="1">Cell inner membrane</location>
        <topology evidence="1">Multi-pass membrane protein</topology>
    </subcellularLocation>
</comment>
<comment type="similarity">
    <text evidence="1">Belongs to the peptidase M48B family.</text>
</comment>
<reference key="1">
    <citation type="journal article" date="2013" name="Proc. Natl. Acad. Sci. U.S.A.">
        <title>Polynucleobacter necessarius, a model for genome reduction in both free-living and symbiotic bacteria.</title>
        <authorList>
            <person name="Boscaro V."/>
            <person name="Felletti M."/>
            <person name="Vannini C."/>
            <person name="Ackerman M.S."/>
            <person name="Chain P.S."/>
            <person name="Malfatti S."/>
            <person name="Vergez L.M."/>
            <person name="Shin M."/>
            <person name="Doak T.G."/>
            <person name="Lynch M."/>
            <person name="Petroni G."/>
        </authorList>
    </citation>
    <scope>NUCLEOTIDE SEQUENCE [LARGE SCALE GENOMIC DNA]</scope>
    <source>
        <strain>STIR1</strain>
    </source>
</reference>